<organism>
    <name type="scientific">Vitis sp.</name>
    <name type="common">Grape</name>
    <dbReference type="NCBI Taxonomy" id="3604"/>
    <lineage>
        <taxon>Eukaryota</taxon>
        <taxon>Viridiplantae</taxon>
        <taxon>Streptophyta</taxon>
        <taxon>Embryophyta</taxon>
        <taxon>Tracheophyta</taxon>
        <taxon>Spermatophyta</taxon>
        <taxon>Magnoliopsida</taxon>
        <taxon>eudicotyledons</taxon>
        <taxon>Gunneridae</taxon>
        <taxon>Pentapetalae</taxon>
        <taxon>rosids</taxon>
        <taxon>Vitales</taxon>
        <taxon>Vitaceae</taxon>
        <taxon>Viteae</taxon>
        <taxon>Vitis</taxon>
    </lineage>
</organism>
<sequence length="62" mass="6524">GLAYDISDDQQDITRMGINPIMMSAGELESGNAGEPAKMCCLFINDLDAGAGRIGVCTGIFR</sequence>
<comment type="function">
    <text evidence="4">Activation of RuBisCO (ribulose-1,5-bisphosphate carboxylase/oxygenase; EC 4.1.1.39) involves the ATP-dependent carboxylation of the epsilon-amino group of lysine leading to a carbamate structure.</text>
</comment>
<comment type="subcellular location">
    <subcellularLocation>
        <location>Plastid</location>
        <location>Chloroplast stroma</location>
    </subcellularLocation>
</comment>
<comment type="similarity">
    <text evidence="1">Belongs to the RuBisCO activase family.</text>
</comment>
<dbReference type="GO" id="GO:0009570">
    <property type="term" value="C:chloroplast stroma"/>
    <property type="evidence" value="ECO:0007669"/>
    <property type="project" value="UniProtKB-SubCell"/>
</dbReference>
<dbReference type="GO" id="GO:0009579">
    <property type="term" value="C:thylakoid"/>
    <property type="evidence" value="ECO:0007669"/>
    <property type="project" value="TreeGrafter"/>
</dbReference>
<dbReference type="GO" id="GO:0005524">
    <property type="term" value="F:ATP binding"/>
    <property type="evidence" value="ECO:0007669"/>
    <property type="project" value="UniProtKB-KW"/>
</dbReference>
<dbReference type="GO" id="GO:0046863">
    <property type="term" value="F:ribulose-1,5-bisphosphate carboxylase/oxygenase activator activity"/>
    <property type="evidence" value="ECO:0007669"/>
    <property type="project" value="TreeGrafter"/>
</dbReference>
<dbReference type="InterPro" id="IPR044960">
    <property type="entry name" value="RCA-like"/>
</dbReference>
<dbReference type="PANTHER" id="PTHR32429">
    <property type="match status" value="1"/>
</dbReference>
<dbReference type="PANTHER" id="PTHR32429:SF32">
    <property type="entry name" value="RIBULOSE BISPHOSPHATE CARBOXYLASE_OXYGENASE ACTIVASE, CHLOROPLASTIC"/>
    <property type="match status" value="1"/>
</dbReference>
<name>RCA_VITSX</name>
<reference evidence="4" key="1">
    <citation type="submission" date="2007-02" db="UniProtKB">
        <title>Suppression of polypeptides in response to water stress in Florida hybrid grape.</title>
        <authorList>
            <person name="Katam R."/>
            <person name="Vasanthaiah H.K.N."/>
            <person name="Basha S.M."/>
            <person name="McClung S."/>
        </authorList>
    </citation>
    <scope>PROTEIN SEQUENCE</scope>
    <source>
        <strain evidence="2">V.aestivalis X V.lincecumi cv. Suwannee</strain>
        <tissue evidence="2">Leaf</tissue>
    </source>
</reference>
<evidence type="ECO:0000255" key="1"/>
<evidence type="ECO:0000269" key="2">
    <source ref="1"/>
</evidence>
<evidence type="ECO:0000303" key="3">
    <source ref="1"/>
</evidence>
<evidence type="ECO:0000305" key="4"/>
<proteinExistence type="evidence at protein level"/>
<keyword id="KW-0067">ATP-binding</keyword>
<keyword id="KW-0150">Chloroplast</keyword>
<keyword id="KW-0903">Direct protein sequencing</keyword>
<keyword id="KW-0547">Nucleotide-binding</keyword>
<keyword id="KW-0934">Plastid</keyword>
<protein>
    <recommendedName>
        <fullName>Ribulose bisphosphate carboxylase/oxygenase activase, chloroplastic</fullName>
        <shortName>RA</shortName>
        <shortName>RuBisCO activase</shortName>
    </recommendedName>
</protein>
<feature type="chain" id="PRO_0000284765" description="Ribulose bisphosphate carboxylase/oxygenase activase, chloroplastic">
    <location>
        <begin position="1"/>
        <end position="62" status="greater than"/>
    </location>
</feature>
<feature type="non-consecutive residues" evidence="3">
    <location>
        <begin position="15"/>
        <end position="16"/>
    </location>
</feature>
<feature type="non-consecutive residues" evidence="3">
    <location>
        <begin position="38"/>
        <end position="39"/>
    </location>
</feature>
<feature type="non-consecutive residues" evidence="3">
    <location>
        <begin position="53"/>
        <end position="54"/>
    </location>
</feature>
<feature type="non-terminal residue" evidence="3">
    <location>
        <position position="62"/>
    </location>
</feature>
<accession>P85111</accession>